<name>UVRB_MYCLE</name>
<sequence>MRVGGRFEVISPHEPAGDQPAAIDELQRRILAGERDVVLLGATGTGKSATTAWLIERLQRPTLVMAPNKTLAAQLANELRGMLPHNAVEYFVSYYDYYQPEAYIAQTDTYIEKDSSINDDVERLRHSATSSLLSRRDVVVVASVSCIYGLGTPQSYLDRSVELAVSNEVPRDGLLRLLVDVQYTRNDLSFTRGSFRVRGDTVEIIPSYEELAVRIEFFGDEIEALYYLHPLTGEVIRQVDSLRIFPATHYVAGPERMAQAISAIEEELAERLAEFERQGKLLEAQRLRMRTNYDIEMMRQVGFCSGIENYSRHIDGRGPGTPPATLLDYFPEDFLLVIDESHVTVPQIGGMYEGDMSRKRNLVEYGFRLPSACDNRPLTWEEFADRIGQTVYLSATPGPYELSQSGGEFVEQVIRPTGLVDPKVVVKPTKGQIDDLIGEIRKRANADQRVLVTTLTKKMAEDLTDYLLEMGIRVRYLHSEVDTLRRVELLRQLRLGDYDVLVGINLLREGLDLPEVSLVAILDADKEGFLRSARSLIQTIGRAARNVSGEVHMYADTITDSMTEAIDETERRRAKQIAYNNANGIDPQPLRKKIADILDQVYREADDTDTVQVGGSGRNVSRGRRAQSEPVRSVSVGVFEGRDTAGMPRAELADLIKDLTAQMMAAASDLQFELAARFRDEIADLKKELRGMDAAGLK</sequence>
<gene>
    <name evidence="1" type="primary">uvrB</name>
    <name type="ordered locus">ML1387</name>
</gene>
<feature type="chain" id="PRO_0000138408" description="UvrABC system protein B">
    <location>
        <begin position="1"/>
        <end position="698"/>
    </location>
</feature>
<feature type="domain" description="Helicase ATP-binding" evidence="1">
    <location>
        <begin position="28"/>
        <end position="414"/>
    </location>
</feature>
<feature type="domain" description="Helicase C-terminal" evidence="1">
    <location>
        <begin position="432"/>
        <end position="598"/>
    </location>
</feature>
<feature type="domain" description="UVR" evidence="1">
    <location>
        <begin position="653"/>
        <end position="688"/>
    </location>
</feature>
<feature type="region of interest" description="Disordered" evidence="2">
    <location>
        <begin position="609"/>
        <end position="629"/>
    </location>
</feature>
<feature type="short sequence motif" description="Beta-hairpin">
    <location>
        <begin position="94"/>
        <end position="117"/>
    </location>
</feature>
<feature type="binding site" evidence="1">
    <location>
        <begin position="41"/>
        <end position="48"/>
    </location>
    <ligand>
        <name>ATP</name>
        <dbReference type="ChEBI" id="CHEBI:30616"/>
    </ligand>
</feature>
<reference key="1">
    <citation type="journal article" date="2001" name="Nature">
        <title>Massive gene decay in the leprosy bacillus.</title>
        <authorList>
            <person name="Cole S.T."/>
            <person name="Eiglmeier K."/>
            <person name="Parkhill J."/>
            <person name="James K.D."/>
            <person name="Thomson N.R."/>
            <person name="Wheeler P.R."/>
            <person name="Honore N."/>
            <person name="Garnier T."/>
            <person name="Churcher C.M."/>
            <person name="Harris D.E."/>
            <person name="Mungall K.L."/>
            <person name="Basham D."/>
            <person name="Brown D."/>
            <person name="Chillingworth T."/>
            <person name="Connor R."/>
            <person name="Davies R.M."/>
            <person name="Devlin K."/>
            <person name="Duthoy S."/>
            <person name="Feltwell T."/>
            <person name="Fraser A."/>
            <person name="Hamlin N."/>
            <person name="Holroyd S."/>
            <person name="Hornsby T."/>
            <person name="Jagels K."/>
            <person name="Lacroix C."/>
            <person name="Maclean J."/>
            <person name="Moule S."/>
            <person name="Murphy L.D."/>
            <person name="Oliver K."/>
            <person name="Quail M.A."/>
            <person name="Rajandream M.A."/>
            <person name="Rutherford K.M."/>
            <person name="Rutter S."/>
            <person name="Seeger K."/>
            <person name="Simon S."/>
            <person name="Simmonds M."/>
            <person name="Skelton J."/>
            <person name="Squares R."/>
            <person name="Squares S."/>
            <person name="Stevens K."/>
            <person name="Taylor K."/>
            <person name="Whitehead S."/>
            <person name="Woodward J.R."/>
            <person name="Barrell B.G."/>
        </authorList>
    </citation>
    <scope>NUCLEOTIDE SEQUENCE [LARGE SCALE GENOMIC DNA]</scope>
    <source>
        <strain>TN</strain>
    </source>
</reference>
<organism>
    <name type="scientific">Mycobacterium leprae (strain TN)</name>
    <dbReference type="NCBI Taxonomy" id="272631"/>
    <lineage>
        <taxon>Bacteria</taxon>
        <taxon>Bacillati</taxon>
        <taxon>Actinomycetota</taxon>
        <taxon>Actinomycetes</taxon>
        <taxon>Mycobacteriales</taxon>
        <taxon>Mycobacteriaceae</taxon>
        <taxon>Mycobacterium</taxon>
    </lineage>
</organism>
<proteinExistence type="inferred from homology"/>
<accession>P57991</accession>
<dbReference type="EMBL" id="AL583921">
    <property type="protein sequence ID" value="CAC31768.1"/>
    <property type="molecule type" value="Genomic_DNA"/>
</dbReference>
<dbReference type="PIR" id="E87082">
    <property type="entry name" value="E87082"/>
</dbReference>
<dbReference type="RefSeq" id="NP_301986.1">
    <property type="nucleotide sequence ID" value="NC_002677.1"/>
</dbReference>
<dbReference type="SMR" id="P57991"/>
<dbReference type="STRING" id="272631.gene:17575226"/>
<dbReference type="KEGG" id="mle:ML1387"/>
<dbReference type="PATRIC" id="fig|272631.5.peg.2580"/>
<dbReference type="Leproma" id="ML1387"/>
<dbReference type="eggNOG" id="COG0556">
    <property type="taxonomic scope" value="Bacteria"/>
</dbReference>
<dbReference type="HOGENOM" id="CLU_009621_2_1_11"/>
<dbReference type="OrthoDB" id="9806651at2"/>
<dbReference type="Proteomes" id="UP000000806">
    <property type="component" value="Chromosome"/>
</dbReference>
<dbReference type="GO" id="GO:0005737">
    <property type="term" value="C:cytoplasm"/>
    <property type="evidence" value="ECO:0007669"/>
    <property type="project" value="UniProtKB-SubCell"/>
</dbReference>
<dbReference type="GO" id="GO:0009380">
    <property type="term" value="C:excinuclease repair complex"/>
    <property type="evidence" value="ECO:0007669"/>
    <property type="project" value="InterPro"/>
</dbReference>
<dbReference type="GO" id="GO:0005524">
    <property type="term" value="F:ATP binding"/>
    <property type="evidence" value="ECO:0007669"/>
    <property type="project" value="UniProtKB-UniRule"/>
</dbReference>
<dbReference type="GO" id="GO:0016887">
    <property type="term" value="F:ATP hydrolysis activity"/>
    <property type="evidence" value="ECO:0007669"/>
    <property type="project" value="InterPro"/>
</dbReference>
<dbReference type="GO" id="GO:0003677">
    <property type="term" value="F:DNA binding"/>
    <property type="evidence" value="ECO:0007669"/>
    <property type="project" value="UniProtKB-UniRule"/>
</dbReference>
<dbReference type="GO" id="GO:0009381">
    <property type="term" value="F:excinuclease ABC activity"/>
    <property type="evidence" value="ECO:0007669"/>
    <property type="project" value="UniProtKB-UniRule"/>
</dbReference>
<dbReference type="GO" id="GO:0006289">
    <property type="term" value="P:nucleotide-excision repair"/>
    <property type="evidence" value="ECO:0007669"/>
    <property type="project" value="UniProtKB-UniRule"/>
</dbReference>
<dbReference type="GO" id="GO:0009432">
    <property type="term" value="P:SOS response"/>
    <property type="evidence" value="ECO:0007669"/>
    <property type="project" value="UniProtKB-UniRule"/>
</dbReference>
<dbReference type="CDD" id="cd17916">
    <property type="entry name" value="DEXHc_UvrB"/>
    <property type="match status" value="1"/>
</dbReference>
<dbReference type="CDD" id="cd18790">
    <property type="entry name" value="SF2_C_UvrB"/>
    <property type="match status" value="1"/>
</dbReference>
<dbReference type="FunFam" id="3.40.50.300:FF:000257">
    <property type="entry name" value="UvrABC system protein B"/>
    <property type="match status" value="1"/>
</dbReference>
<dbReference type="FunFam" id="3.40.50.300:FF:000477">
    <property type="entry name" value="UvrABC system protein B"/>
    <property type="match status" value="1"/>
</dbReference>
<dbReference type="FunFam" id="4.10.860.10:FF:000009">
    <property type="entry name" value="UvrABC system protein B"/>
    <property type="match status" value="1"/>
</dbReference>
<dbReference type="Gene3D" id="3.40.50.300">
    <property type="entry name" value="P-loop containing nucleotide triphosphate hydrolases"/>
    <property type="match status" value="3"/>
</dbReference>
<dbReference type="Gene3D" id="4.10.860.10">
    <property type="entry name" value="UVR domain"/>
    <property type="match status" value="1"/>
</dbReference>
<dbReference type="HAMAP" id="MF_00204">
    <property type="entry name" value="UvrB"/>
    <property type="match status" value="1"/>
</dbReference>
<dbReference type="InterPro" id="IPR006935">
    <property type="entry name" value="Helicase/UvrB_N"/>
</dbReference>
<dbReference type="InterPro" id="IPR014001">
    <property type="entry name" value="Helicase_ATP-bd"/>
</dbReference>
<dbReference type="InterPro" id="IPR001650">
    <property type="entry name" value="Helicase_C-like"/>
</dbReference>
<dbReference type="InterPro" id="IPR027417">
    <property type="entry name" value="P-loop_NTPase"/>
</dbReference>
<dbReference type="InterPro" id="IPR001943">
    <property type="entry name" value="UVR_dom"/>
</dbReference>
<dbReference type="InterPro" id="IPR036876">
    <property type="entry name" value="UVR_dom_sf"/>
</dbReference>
<dbReference type="InterPro" id="IPR004807">
    <property type="entry name" value="UvrB"/>
</dbReference>
<dbReference type="InterPro" id="IPR041471">
    <property type="entry name" value="UvrB_inter"/>
</dbReference>
<dbReference type="InterPro" id="IPR024759">
    <property type="entry name" value="UvrB_YAD/RRR_dom"/>
</dbReference>
<dbReference type="NCBIfam" id="NF003673">
    <property type="entry name" value="PRK05298.1"/>
    <property type="match status" value="1"/>
</dbReference>
<dbReference type="NCBIfam" id="TIGR00631">
    <property type="entry name" value="uvrb"/>
    <property type="match status" value="1"/>
</dbReference>
<dbReference type="PANTHER" id="PTHR24029">
    <property type="entry name" value="UVRABC SYSTEM PROTEIN B"/>
    <property type="match status" value="1"/>
</dbReference>
<dbReference type="PANTHER" id="PTHR24029:SF0">
    <property type="entry name" value="UVRABC SYSTEM PROTEIN B"/>
    <property type="match status" value="1"/>
</dbReference>
<dbReference type="Pfam" id="PF00271">
    <property type="entry name" value="Helicase_C"/>
    <property type="match status" value="1"/>
</dbReference>
<dbReference type="Pfam" id="PF04851">
    <property type="entry name" value="ResIII"/>
    <property type="match status" value="1"/>
</dbReference>
<dbReference type="Pfam" id="PF02151">
    <property type="entry name" value="UVR"/>
    <property type="match status" value="1"/>
</dbReference>
<dbReference type="Pfam" id="PF12344">
    <property type="entry name" value="UvrB"/>
    <property type="match status" value="1"/>
</dbReference>
<dbReference type="Pfam" id="PF17757">
    <property type="entry name" value="UvrB_inter"/>
    <property type="match status" value="1"/>
</dbReference>
<dbReference type="SMART" id="SM00487">
    <property type="entry name" value="DEXDc"/>
    <property type="match status" value="1"/>
</dbReference>
<dbReference type="SMART" id="SM00490">
    <property type="entry name" value="HELICc"/>
    <property type="match status" value="1"/>
</dbReference>
<dbReference type="SUPFAM" id="SSF46600">
    <property type="entry name" value="C-terminal UvrC-binding domain of UvrB"/>
    <property type="match status" value="1"/>
</dbReference>
<dbReference type="SUPFAM" id="SSF52540">
    <property type="entry name" value="P-loop containing nucleoside triphosphate hydrolases"/>
    <property type="match status" value="2"/>
</dbReference>
<dbReference type="PROSITE" id="PS51192">
    <property type="entry name" value="HELICASE_ATP_BIND_1"/>
    <property type="match status" value="1"/>
</dbReference>
<dbReference type="PROSITE" id="PS51194">
    <property type="entry name" value="HELICASE_CTER"/>
    <property type="match status" value="1"/>
</dbReference>
<dbReference type="PROSITE" id="PS50151">
    <property type="entry name" value="UVR"/>
    <property type="match status" value="1"/>
</dbReference>
<evidence type="ECO:0000255" key="1">
    <source>
        <dbReference type="HAMAP-Rule" id="MF_00204"/>
    </source>
</evidence>
<evidence type="ECO:0000256" key="2">
    <source>
        <dbReference type="SAM" id="MobiDB-lite"/>
    </source>
</evidence>
<comment type="function">
    <text evidence="1">The UvrABC repair system catalyzes the recognition and processing of DNA lesions. A damage recognition complex composed of 2 UvrA and 2 UvrB subunits scans DNA for abnormalities. Upon binding of the UvrA(2)B(2) complex to a putative damaged site, the DNA wraps around one UvrB monomer. DNA wrap is dependent on ATP binding by UvrB and probably causes local melting of the DNA helix, facilitating insertion of UvrB beta-hairpin between the DNA strands. Then UvrB probes one DNA strand for the presence of a lesion. If a lesion is found the UvrA subunits dissociate and the UvrB-DNA preincision complex is formed. This complex is subsequently bound by UvrC and the second UvrB is released. If no lesion is found, the DNA wraps around the other UvrB subunit that will check the other stand for damage.</text>
</comment>
<comment type="subunit">
    <text evidence="1">Forms a heterotetramer with UvrA during the search for lesions. Interacts with UvrC in an incision complex.</text>
</comment>
<comment type="subcellular location">
    <subcellularLocation>
        <location evidence="1">Cytoplasm</location>
    </subcellularLocation>
</comment>
<comment type="domain">
    <text evidence="1">The beta-hairpin motif is involved in DNA binding.</text>
</comment>
<comment type="similarity">
    <text evidence="1">Belongs to the UvrB family.</text>
</comment>
<protein>
    <recommendedName>
        <fullName evidence="1">UvrABC system protein B</fullName>
        <shortName evidence="1">Protein UvrB</shortName>
    </recommendedName>
    <alternativeName>
        <fullName evidence="1">Excinuclease ABC subunit B</fullName>
    </alternativeName>
</protein>
<keyword id="KW-0067">ATP-binding</keyword>
<keyword id="KW-0963">Cytoplasm</keyword>
<keyword id="KW-0227">DNA damage</keyword>
<keyword id="KW-0228">DNA excision</keyword>
<keyword id="KW-0234">DNA repair</keyword>
<keyword id="KW-0267">Excision nuclease</keyword>
<keyword id="KW-0547">Nucleotide-binding</keyword>
<keyword id="KW-1185">Reference proteome</keyword>
<keyword id="KW-0742">SOS response</keyword>